<proteinExistence type="evidence at transcript level"/>
<comment type="function">
    <text evidence="1">Negative feedback regulator that controls excessive innate immune responses. Regulates both Toll-like receptor 4 (TLR4) and DDX58/RIG1-like helicases (RLH) pathways. May inhibit the LTR pathway by direct interaction with TRAF6 and attenuation of NF-kappa-B activation. May negatively regulate the RLH pathway downstream from MAVS and upstream of NF-kappa-B and IRF3 (By similarity).</text>
</comment>
<comment type="subunit">
    <text evidence="1">Interacts with MAVS, TICAM1, TRAF1, TRAF2, TRAF3 and TRAF6.</text>
</comment>
<comment type="alternative products">
    <event type="alternative splicing"/>
    <isoform>
        <id>Q58D05-1</id>
        <name>1</name>
        <sequence type="displayed"/>
    </isoform>
    <isoform>
        <id>Q58D05-2</id>
        <name>2</name>
        <sequence type="described" ref="VSP_023293"/>
    </isoform>
</comment>
<name>TRAD1_BOVIN</name>
<reference key="1">
    <citation type="journal article" date="2005" name="BMC Genomics">
        <title>Characterization of 954 bovine full-CDS cDNA sequences.</title>
        <authorList>
            <person name="Harhay G.P."/>
            <person name="Sonstegard T.S."/>
            <person name="Keele J.W."/>
            <person name="Heaton M.P."/>
            <person name="Clawson M.L."/>
            <person name="Snelling W.M."/>
            <person name="Wiedmann R.T."/>
            <person name="Van Tassell C.P."/>
            <person name="Smith T.P.L."/>
        </authorList>
    </citation>
    <scope>NUCLEOTIDE SEQUENCE [LARGE SCALE MRNA] (ISOFORM 1)</scope>
</reference>
<reference key="2">
    <citation type="submission" date="2006-09" db="EMBL/GenBank/DDBJ databases">
        <authorList>
            <consortium name="NIH - Mammalian Gene Collection (MGC) project"/>
        </authorList>
    </citation>
    <scope>NUCLEOTIDE SEQUENCE [LARGE SCALE MRNA] (ISOFORM 2)</scope>
    <source>
        <strain>Hereford</strain>
        <tissue>Fetal skin</tissue>
    </source>
</reference>
<keyword id="KW-0007">Acetylation</keyword>
<keyword id="KW-0025">Alternative splicing</keyword>
<keyword id="KW-0479">Metal-binding</keyword>
<keyword id="KW-0597">Phosphoprotein</keyword>
<keyword id="KW-1185">Reference proteome</keyword>
<keyword id="KW-0862">Zinc</keyword>
<keyword id="KW-0863">Zinc-finger</keyword>
<sequence length="580" mass="64847">MAEFLNDQDTRLCDNCKKEIPVFNFTIHEIHCQRNIGVCPVCKEPFPKCDMETHMATEHCQVTCKCNKKLEKRQLKKHEETECPLRLALCQHCDLELSVLKLKDHEDYCGARTELCGTCGRNVLVKDLKTHPEVCGRDVEEKRVEAAMPPNAYDESWGPDRIWIASQLRQIEALDPPMRLPRRPLRAFESDLFQSRTTNQRSMTAQFPIQNNLLEEQERQERNRSRQTPKERGEDSANLDFMLALSLQNEGQAPTLAEQDFWRVIYEADQSREGPSALNDIRGAVDETMLPCEFCEELYPEELLIDHQTSCNPSCALPPLSVGSTSPRGVEDPDAIFQKLMRESAGGQFESLMGFSSSAPVEDSVVIPCEFCGVQLEEEVLFHHQDQCDQRPATANNHVSEGIPSQDLQPRETSPELPKRRVRHQGDLSSGYMNDLKQEMAKGPTYPLPSSRPPNNTTAPPNRLSTSTSGPRPGCQPSPPRALKLNNLDSQGVRGHSRNSHNGALAPGHVPAAYPARSLYPENLVPSFPRGPSGRYGASSRSEGGRNPRVTPTAASYRSRTAKAKTPKQQGAGDAEEEEE</sequence>
<evidence type="ECO:0000250" key="1"/>
<evidence type="ECO:0000250" key="2">
    <source>
        <dbReference type="UniProtKB" id="O14545"/>
    </source>
</evidence>
<evidence type="ECO:0000256" key="3">
    <source>
        <dbReference type="SAM" id="MobiDB-lite"/>
    </source>
</evidence>
<evidence type="ECO:0000303" key="4">
    <source ref="2"/>
</evidence>
<evidence type="ECO:0000305" key="5"/>
<organism>
    <name type="scientific">Bos taurus</name>
    <name type="common">Bovine</name>
    <dbReference type="NCBI Taxonomy" id="9913"/>
    <lineage>
        <taxon>Eukaryota</taxon>
        <taxon>Metazoa</taxon>
        <taxon>Chordata</taxon>
        <taxon>Craniata</taxon>
        <taxon>Vertebrata</taxon>
        <taxon>Euteleostomi</taxon>
        <taxon>Mammalia</taxon>
        <taxon>Eutheria</taxon>
        <taxon>Laurasiatheria</taxon>
        <taxon>Artiodactyla</taxon>
        <taxon>Ruminantia</taxon>
        <taxon>Pecora</taxon>
        <taxon>Bovidae</taxon>
        <taxon>Bovinae</taxon>
        <taxon>Bos</taxon>
    </lineage>
</organism>
<accession>Q58D05</accession>
<accession>Q08E03</accession>
<dbReference type="EMBL" id="BT021792">
    <property type="protein sequence ID" value="AAX46639.1"/>
    <property type="molecule type" value="mRNA"/>
</dbReference>
<dbReference type="EMBL" id="BC123486">
    <property type="protein sequence ID" value="AAI23487.1"/>
    <property type="molecule type" value="mRNA"/>
</dbReference>
<dbReference type="RefSeq" id="NP_001014908.1">
    <molecule id="Q58D05-1"/>
    <property type="nucleotide sequence ID" value="NM_001014908.1"/>
</dbReference>
<dbReference type="RefSeq" id="XP_024832953.1">
    <molecule id="Q58D05-2"/>
    <property type="nucleotide sequence ID" value="XM_024977185.2"/>
</dbReference>
<dbReference type="FunCoup" id="Q58D05">
    <property type="interactions" value="3236"/>
</dbReference>
<dbReference type="STRING" id="9913.ENSBTAP00000011542"/>
<dbReference type="Ensembl" id="ENSBTAT00000011542.6">
    <molecule id="Q58D05-2"/>
    <property type="protein sequence ID" value="ENSBTAP00000011542.6"/>
    <property type="gene ID" value="ENSBTAG00000008761.6"/>
</dbReference>
<dbReference type="GeneID" id="512642"/>
<dbReference type="KEGG" id="bta:512642"/>
<dbReference type="CTD" id="10906"/>
<dbReference type="VEuPathDB" id="HostDB:ENSBTAG00000008761"/>
<dbReference type="GeneTree" id="ENSGT00530000063869"/>
<dbReference type="InParanoid" id="Q58D05"/>
<dbReference type="OMA" id="AHQSSEC"/>
<dbReference type="OrthoDB" id="193703at2759"/>
<dbReference type="Proteomes" id="UP000009136">
    <property type="component" value="Chromosome 17"/>
</dbReference>
<dbReference type="Bgee" id="ENSBTAG00000008761">
    <property type="expression patterns" value="Expressed in myometrium and 108 other cell types or tissues"/>
</dbReference>
<dbReference type="GO" id="GO:0005739">
    <property type="term" value="C:mitochondrion"/>
    <property type="evidence" value="ECO:0000318"/>
    <property type="project" value="GO_Central"/>
</dbReference>
<dbReference type="GO" id="GO:0008270">
    <property type="term" value="F:zinc ion binding"/>
    <property type="evidence" value="ECO:0007669"/>
    <property type="project" value="UniProtKB-KW"/>
</dbReference>
<dbReference type="GO" id="GO:0045824">
    <property type="term" value="P:negative regulation of innate immune response"/>
    <property type="evidence" value="ECO:0000250"/>
    <property type="project" value="UniProtKB"/>
</dbReference>
<dbReference type="FunFam" id="3.30.40.10:FF:000378">
    <property type="entry name" value="TRAF-type zinc finger domain-containing 1"/>
    <property type="match status" value="1"/>
</dbReference>
<dbReference type="FunFam" id="3.30.40.10:FF:000402">
    <property type="entry name" value="TRAF-type zinc finger domain-containing protein 1"/>
    <property type="match status" value="1"/>
</dbReference>
<dbReference type="Gene3D" id="3.30.40.10">
    <property type="entry name" value="Zinc/RING finger domain, C3HC4 (zinc finger)"/>
    <property type="match status" value="2"/>
</dbReference>
<dbReference type="InterPro" id="IPR051986">
    <property type="entry name" value="Innate_Immune_Apopt_Reg"/>
</dbReference>
<dbReference type="InterPro" id="IPR049439">
    <property type="entry name" value="TRAFD1-XIAF1_Znf"/>
</dbReference>
<dbReference type="InterPro" id="IPR013083">
    <property type="entry name" value="Znf_RING/FYVE/PHD"/>
</dbReference>
<dbReference type="PANTHER" id="PTHR16295:SF19">
    <property type="entry name" value="TRAF-TYPE ZINC FINGER DOMAIN-CONTAINING PROTEIN 1"/>
    <property type="match status" value="1"/>
</dbReference>
<dbReference type="PANTHER" id="PTHR16295">
    <property type="entry name" value="TRAF-TYPE ZINC FINGER PROTEIN-RELATED"/>
    <property type="match status" value="1"/>
</dbReference>
<dbReference type="Pfam" id="PF21366">
    <property type="entry name" value="TRAFD1-XIAF1_ZnF"/>
    <property type="match status" value="1"/>
</dbReference>
<gene>
    <name type="primary">TRAFD1</name>
</gene>
<feature type="initiator methionine" description="Removed" evidence="2">
    <location>
        <position position="1"/>
    </location>
</feature>
<feature type="chain" id="PRO_0000278456" description="TRAF-type zinc finger domain-containing protein 1">
    <location>
        <begin position="2"/>
        <end position="580"/>
    </location>
</feature>
<feature type="zinc finger region" description="TRAF-type">
    <location>
        <begin position="27"/>
        <end position="103"/>
    </location>
</feature>
<feature type="region of interest" description="Disordered" evidence="3">
    <location>
        <begin position="197"/>
        <end position="236"/>
    </location>
</feature>
<feature type="region of interest" description="Disordered" evidence="3">
    <location>
        <begin position="392"/>
        <end position="580"/>
    </location>
</feature>
<feature type="compositionally biased region" description="Polar residues" evidence="3">
    <location>
        <begin position="197"/>
        <end position="209"/>
    </location>
</feature>
<feature type="compositionally biased region" description="Basic and acidic residues" evidence="3">
    <location>
        <begin position="216"/>
        <end position="235"/>
    </location>
</feature>
<feature type="compositionally biased region" description="Basic and acidic residues" evidence="3">
    <location>
        <begin position="409"/>
        <end position="419"/>
    </location>
</feature>
<feature type="compositionally biased region" description="Low complexity" evidence="3">
    <location>
        <begin position="453"/>
        <end position="463"/>
    </location>
</feature>
<feature type="modified residue" description="N-acetylalanine" evidence="2">
    <location>
        <position position="2"/>
    </location>
</feature>
<feature type="modified residue" description="Phosphoserine" evidence="2">
    <location>
        <position position="190"/>
    </location>
</feature>
<feature type="modified residue" description="Phosphoserine" evidence="2">
    <location>
        <position position="326"/>
    </location>
</feature>
<feature type="modified residue" description="Phosphoserine" evidence="2">
    <location>
        <position position="414"/>
    </location>
</feature>
<feature type="modified residue" description="Phosphoserine" evidence="2">
    <location>
        <position position="429"/>
    </location>
</feature>
<feature type="modified residue" description="Phosphoserine" evidence="2">
    <location>
        <position position="469"/>
    </location>
</feature>
<feature type="splice variant" id="VSP_023293" description="In isoform 2." evidence="4">
    <original>K</original>
    <variation>KQ</variation>
    <location>
        <position position="563"/>
    </location>
</feature>
<feature type="sequence conflict" description="In Ref. 2; AAI23487." evidence="5" ref="2">
    <original>H</original>
    <variation>R</variation>
    <location>
        <position position="496"/>
    </location>
</feature>
<protein>
    <recommendedName>
        <fullName>TRAF-type zinc finger domain-containing protein 1</fullName>
    </recommendedName>
</protein>